<name>KGUA_MESH7</name>
<organism>
    <name type="scientific">Mesomycoplasma hyopneumoniae (strain 7448)</name>
    <name type="common">Mycoplasma hyopneumoniae</name>
    <dbReference type="NCBI Taxonomy" id="262722"/>
    <lineage>
        <taxon>Bacteria</taxon>
        <taxon>Bacillati</taxon>
        <taxon>Mycoplasmatota</taxon>
        <taxon>Mycoplasmoidales</taxon>
        <taxon>Metamycoplasmataceae</taxon>
        <taxon>Mesomycoplasma</taxon>
    </lineage>
</organism>
<dbReference type="EC" id="2.7.4.8" evidence="1"/>
<dbReference type="EMBL" id="AE017244">
    <property type="protein sequence ID" value="AAZ53527.1"/>
    <property type="molecule type" value="Genomic_DNA"/>
</dbReference>
<dbReference type="RefSeq" id="WP_011290044.1">
    <property type="nucleotide sequence ID" value="NC_007332.1"/>
</dbReference>
<dbReference type="SMR" id="Q4A8L2"/>
<dbReference type="KEGG" id="mhp:MHP7448_0153"/>
<dbReference type="HOGENOM" id="CLU_001715_1_1_14"/>
<dbReference type="Proteomes" id="UP000000553">
    <property type="component" value="Chromosome"/>
</dbReference>
<dbReference type="GO" id="GO:0005829">
    <property type="term" value="C:cytosol"/>
    <property type="evidence" value="ECO:0007669"/>
    <property type="project" value="TreeGrafter"/>
</dbReference>
<dbReference type="GO" id="GO:0005524">
    <property type="term" value="F:ATP binding"/>
    <property type="evidence" value="ECO:0007669"/>
    <property type="project" value="UniProtKB-UniRule"/>
</dbReference>
<dbReference type="GO" id="GO:0004385">
    <property type="term" value="F:guanylate kinase activity"/>
    <property type="evidence" value="ECO:0007669"/>
    <property type="project" value="UniProtKB-UniRule"/>
</dbReference>
<dbReference type="CDD" id="cd00071">
    <property type="entry name" value="GMPK"/>
    <property type="match status" value="1"/>
</dbReference>
<dbReference type="FunFam" id="3.30.63.10:FF:000005">
    <property type="entry name" value="Guanylate kinase"/>
    <property type="match status" value="1"/>
</dbReference>
<dbReference type="Gene3D" id="3.30.63.10">
    <property type="entry name" value="Guanylate Kinase phosphate binding domain"/>
    <property type="match status" value="1"/>
</dbReference>
<dbReference type="Gene3D" id="3.40.50.300">
    <property type="entry name" value="P-loop containing nucleotide triphosphate hydrolases"/>
    <property type="match status" value="1"/>
</dbReference>
<dbReference type="HAMAP" id="MF_00328">
    <property type="entry name" value="Guanylate_kinase"/>
    <property type="match status" value="1"/>
</dbReference>
<dbReference type="InterPro" id="IPR008145">
    <property type="entry name" value="GK/Ca_channel_bsu"/>
</dbReference>
<dbReference type="InterPro" id="IPR008144">
    <property type="entry name" value="Guanylate_kin-like_dom"/>
</dbReference>
<dbReference type="InterPro" id="IPR017665">
    <property type="entry name" value="Guanylate_kinase"/>
</dbReference>
<dbReference type="InterPro" id="IPR020590">
    <property type="entry name" value="Guanylate_kinase_CS"/>
</dbReference>
<dbReference type="InterPro" id="IPR027417">
    <property type="entry name" value="P-loop_NTPase"/>
</dbReference>
<dbReference type="NCBIfam" id="TIGR03263">
    <property type="entry name" value="guanyl_kin"/>
    <property type="match status" value="1"/>
</dbReference>
<dbReference type="PANTHER" id="PTHR23117:SF13">
    <property type="entry name" value="GUANYLATE KINASE"/>
    <property type="match status" value="1"/>
</dbReference>
<dbReference type="PANTHER" id="PTHR23117">
    <property type="entry name" value="GUANYLATE KINASE-RELATED"/>
    <property type="match status" value="1"/>
</dbReference>
<dbReference type="Pfam" id="PF00625">
    <property type="entry name" value="Guanylate_kin"/>
    <property type="match status" value="1"/>
</dbReference>
<dbReference type="SMART" id="SM00072">
    <property type="entry name" value="GuKc"/>
    <property type="match status" value="1"/>
</dbReference>
<dbReference type="SUPFAM" id="SSF52540">
    <property type="entry name" value="P-loop containing nucleoside triphosphate hydrolases"/>
    <property type="match status" value="1"/>
</dbReference>
<dbReference type="PROSITE" id="PS00856">
    <property type="entry name" value="GUANYLATE_KINASE_1"/>
    <property type="match status" value="1"/>
</dbReference>
<dbReference type="PROSITE" id="PS50052">
    <property type="entry name" value="GUANYLATE_KINASE_2"/>
    <property type="match status" value="1"/>
</dbReference>
<evidence type="ECO:0000255" key="1">
    <source>
        <dbReference type="HAMAP-Rule" id="MF_00328"/>
    </source>
</evidence>
<reference key="1">
    <citation type="journal article" date="2005" name="J. Bacteriol.">
        <title>Swine and poultry pathogens: the complete genome sequences of two strains of Mycoplasma hyopneumoniae and a strain of Mycoplasma synoviae.</title>
        <authorList>
            <person name="Vasconcelos A.T.R."/>
            <person name="Ferreira H.B."/>
            <person name="Bizarro C.V."/>
            <person name="Bonatto S.L."/>
            <person name="Carvalho M.O."/>
            <person name="Pinto P.M."/>
            <person name="Almeida D.F."/>
            <person name="Almeida L.G.P."/>
            <person name="Almeida R."/>
            <person name="Alves-Junior L."/>
            <person name="Assuncao E.N."/>
            <person name="Azevedo V.A.C."/>
            <person name="Bogo M.R."/>
            <person name="Brigido M.M."/>
            <person name="Brocchi M."/>
            <person name="Burity H.A."/>
            <person name="Camargo A.A."/>
            <person name="Camargo S.S."/>
            <person name="Carepo M.S."/>
            <person name="Carraro D.M."/>
            <person name="de Mattos Cascardo J.C."/>
            <person name="Castro L.A."/>
            <person name="Cavalcanti G."/>
            <person name="Chemale G."/>
            <person name="Collevatti R.G."/>
            <person name="Cunha C.W."/>
            <person name="Dallagiovanna B."/>
            <person name="Dambros B.P."/>
            <person name="Dellagostin O.A."/>
            <person name="Falcao C."/>
            <person name="Fantinatti-Garboggini F."/>
            <person name="Felipe M.S.S."/>
            <person name="Fiorentin L."/>
            <person name="Franco G.R."/>
            <person name="Freitas N.S.A."/>
            <person name="Frias D."/>
            <person name="Grangeiro T.B."/>
            <person name="Grisard E.C."/>
            <person name="Guimaraes C.T."/>
            <person name="Hungria M."/>
            <person name="Jardim S.N."/>
            <person name="Krieger M.A."/>
            <person name="Laurino J.P."/>
            <person name="Lima L.F.A."/>
            <person name="Lopes M.I."/>
            <person name="Loreto E.L.S."/>
            <person name="Madeira H.M.F."/>
            <person name="Manfio G.P."/>
            <person name="Maranhao A.Q."/>
            <person name="Martinkovics C.T."/>
            <person name="Medeiros S.R.B."/>
            <person name="Moreira M.A.M."/>
            <person name="Neiva M."/>
            <person name="Ramalho-Neto C.E."/>
            <person name="Nicolas M.F."/>
            <person name="Oliveira S.C."/>
            <person name="Paixao R.F.C."/>
            <person name="Pedrosa F.O."/>
            <person name="Pena S.D.J."/>
            <person name="Pereira M."/>
            <person name="Pereira-Ferrari L."/>
            <person name="Piffer I."/>
            <person name="Pinto L.S."/>
            <person name="Potrich D.P."/>
            <person name="Salim A.C.M."/>
            <person name="Santos F.R."/>
            <person name="Schmitt R."/>
            <person name="Schneider M.P.C."/>
            <person name="Schrank A."/>
            <person name="Schrank I.S."/>
            <person name="Schuck A.F."/>
            <person name="Seuanez H.N."/>
            <person name="Silva D.W."/>
            <person name="Silva R."/>
            <person name="Silva S.C."/>
            <person name="Soares C.M.A."/>
            <person name="Souza K.R.L."/>
            <person name="Souza R.C."/>
            <person name="Staats C.C."/>
            <person name="Steffens M.B.R."/>
            <person name="Teixeira S.M.R."/>
            <person name="Urmenyi T.P."/>
            <person name="Vainstein M.H."/>
            <person name="Zuccherato L.W."/>
            <person name="Simpson A.J.G."/>
            <person name="Zaha A."/>
        </authorList>
    </citation>
    <scope>NUCLEOTIDE SEQUENCE [LARGE SCALE GENOMIC DNA]</scope>
    <source>
        <strain>7448</strain>
    </source>
</reference>
<feature type="chain" id="PRO_0000266351" description="Guanylate kinase">
    <location>
        <begin position="1"/>
        <end position="197"/>
    </location>
</feature>
<feature type="domain" description="Guanylate kinase-like" evidence="1">
    <location>
        <begin position="6"/>
        <end position="191"/>
    </location>
</feature>
<feature type="binding site" evidence="1">
    <location>
        <begin position="13"/>
        <end position="20"/>
    </location>
    <ligand>
        <name>ATP</name>
        <dbReference type="ChEBI" id="CHEBI:30616"/>
    </ligand>
</feature>
<protein>
    <recommendedName>
        <fullName evidence="1">Guanylate kinase</fullName>
        <ecNumber evidence="1">2.7.4.8</ecNumber>
    </recommendedName>
    <alternativeName>
        <fullName evidence="1">GMP kinase</fullName>
    </alternativeName>
</protein>
<comment type="function">
    <text evidence="1">Essential for recycling GMP and indirectly, cGMP.</text>
</comment>
<comment type="catalytic activity">
    <reaction evidence="1">
        <text>GMP + ATP = GDP + ADP</text>
        <dbReference type="Rhea" id="RHEA:20780"/>
        <dbReference type="ChEBI" id="CHEBI:30616"/>
        <dbReference type="ChEBI" id="CHEBI:58115"/>
        <dbReference type="ChEBI" id="CHEBI:58189"/>
        <dbReference type="ChEBI" id="CHEBI:456216"/>
        <dbReference type="EC" id="2.7.4.8"/>
    </reaction>
</comment>
<comment type="subcellular location">
    <subcellularLocation>
        <location evidence="1">Cytoplasm</location>
    </subcellularLocation>
</comment>
<comment type="similarity">
    <text evidence="1">Belongs to the guanylate kinase family.</text>
</comment>
<accession>Q4A8L2</accession>
<keyword id="KW-0067">ATP-binding</keyword>
<keyword id="KW-0963">Cytoplasm</keyword>
<keyword id="KW-0418">Kinase</keyword>
<keyword id="KW-0547">Nucleotide-binding</keyword>
<keyword id="KW-0808">Transferase</keyword>
<gene>
    <name evidence="1" type="primary">gmk</name>
    <name type="ordered locus">MHP7448_0153</name>
</gene>
<sequence length="197" mass="22765">MKVKMSKLIILSGPSGVGKGTIESLLLKNKNLLIKLAISATTREKRRDEINGVNYFFLTVQEFKEKIENDEFIEWSCHFNNYYGTLKSQIKFIQSQNFIPLLEIDTTGAKNIIENYKNKGELSQLLTIFILPPSIESLKNRIQKRLTETNIQINQRLEKAKAEIKVKNLFKFQVVNDNLEKCVAQIEKIISKEIQKT</sequence>
<proteinExistence type="inferred from homology"/>